<protein>
    <recommendedName>
        <fullName>Phosphate acetyltransferase</fullName>
        <ecNumber>2.3.1.8</ecNumber>
    </recommendedName>
    <alternativeName>
        <fullName>Phosphotransacetylase</fullName>
    </alternativeName>
</protein>
<keyword id="KW-0012">Acyltransferase</keyword>
<keyword id="KW-0963">Cytoplasm</keyword>
<keyword id="KW-1185">Reference proteome</keyword>
<keyword id="KW-0808">Transferase</keyword>
<feature type="chain" id="PRO_0000179147" description="Phosphate acetyltransferase">
    <location>
        <begin position="1"/>
        <end position="329"/>
    </location>
</feature>
<organism>
    <name type="scientific">Staphylococcus epidermidis (strain ATCC 35984 / DSM 28319 / BCRC 17069 / CCUG 31568 / BM 3577 / RP62A)</name>
    <dbReference type="NCBI Taxonomy" id="176279"/>
    <lineage>
        <taxon>Bacteria</taxon>
        <taxon>Bacillati</taxon>
        <taxon>Bacillota</taxon>
        <taxon>Bacilli</taxon>
        <taxon>Bacillales</taxon>
        <taxon>Staphylococcaceae</taxon>
        <taxon>Staphylococcus</taxon>
    </lineage>
</organism>
<name>PTAS_STAEQ</name>
<gene>
    <name type="primary">pta</name>
    <name type="ordered locus">SERP0236</name>
</gene>
<proteinExistence type="inferred from homology"/>
<evidence type="ECO:0000305" key="1"/>
<reference key="1">
    <citation type="journal article" date="2005" name="J. Bacteriol.">
        <title>Insights on evolution of virulence and resistance from the complete genome analysis of an early methicillin-resistant Staphylococcus aureus strain and a biofilm-producing methicillin-resistant Staphylococcus epidermidis strain.</title>
        <authorList>
            <person name="Gill S.R."/>
            <person name="Fouts D.E."/>
            <person name="Archer G.L."/>
            <person name="Mongodin E.F."/>
            <person name="DeBoy R.T."/>
            <person name="Ravel J."/>
            <person name="Paulsen I.T."/>
            <person name="Kolonay J.F."/>
            <person name="Brinkac L.M."/>
            <person name="Beanan M.J."/>
            <person name="Dodson R.J."/>
            <person name="Daugherty S.C."/>
            <person name="Madupu R."/>
            <person name="Angiuoli S.V."/>
            <person name="Durkin A.S."/>
            <person name="Haft D.H."/>
            <person name="Vamathevan J.J."/>
            <person name="Khouri H."/>
            <person name="Utterback T.R."/>
            <person name="Lee C."/>
            <person name="Dimitrov G."/>
            <person name="Jiang L."/>
            <person name="Qin H."/>
            <person name="Weidman J."/>
            <person name="Tran K."/>
            <person name="Kang K.H."/>
            <person name="Hance I.R."/>
            <person name="Nelson K.E."/>
            <person name="Fraser C.M."/>
        </authorList>
    </citation>
    <scope>NUCLEOTIDE SEQUENCE [LARGE SCALE GENOMIC DNA]</scope>
    <source>
        <strain>ATCC 35984 / DSM 28319 / BCRC 17069 / CCUG 31568 / BM 3577 / RP62A</strain>
    </source>
</reference>
<comment type="catalytic activity">
    <reaction>
        <text>acetyl-CoA + phosphate = acetyl phosphate + CoA</text>
        <dbReference type="Rhea" id="RHEA:19521"/>
        <dbReference type="ChEBI" id="CHEBI:22191"/>
        <dbReference type="ChEBI" id="CHEBI:43474"/>
        <dbReference type="ChEBI" id="CHEBI:57287"/>
        <dbReference type="ChEBI" id="CHEBI:57288"/>
        <dbReference type="EC" id="2.3.1.8"/>
    </reaction>
</comment>
<comment type="pathway">
    <text>Metabolic intermediate biosynthesis; acetyl-CoA biosynthesis; acetyl-CoA from acetate: step 2/2.</text>
</comment>
<comment type="subcellular location">
    <subcellularLocation>
        <location evidence="1">Cytoplasm</location>
    </subcellularLocation>
</comment>
<comment type="similarity">
    <text evidence="1">Belongs to the phosphate acetyltransferase and butyryltransferase family.</text>
</comment>
<sequence length="329" mass="35101">MADLLSVLQDKLSGKNVKIVLPEGEDERVLIAATQLQKTDYVSPIVLGNEDNIKSLASKHALDLTQIEIIDPATSELKDELVDAFVERRKGKATKEQAVELLDNVNYFGTMLVYTGKAEGLVSGAAHSTGDTVRPALQIIKTKPGVSRTSGIFFMIKGDEQYIFGDCAINPELDAQGLAEIAVESAKSAQSFGMNPKVAMLSFSTKGSAKSDDVTKVQEALKLAQEKAEADQLEHVVIDGEFQFDAAIVPSVAEKKAPGAKIQGDANVFVFPSLEAGNIGYKIAQRLGGYDAVGPVLQGLNSPVNDLSRGCSTEDVYNLSIITAAQALQ</sequence>
<accession>Q5HRF7</accession>
<dbReference type="EC" id="2.3.1.8"/>
<dbReference type="EMBL" id="CP000029">
    <property type="protein sequence ID" value="AAW53623.1"/>
    <property type="molecule type" value="Genomic_DNA"/>
</dbReference>
<dbReference type="RefSeq" id="WP_002445772.1">
    <property type="nucleotide sequence ID" value="NC_002976.3"/>
</dbReference>
<dbReference type="SMR" id="Q5HRF7"/>
<dbReference type="STRING" id="176279.SERP0236"/>
<dbReference type="KEGG" id="ser:SERP0236"/>
<dbReference type="eggNOG" id="COG0280">
    <property type="taxonomic scope" value="Bacteria"/>
</dbReference>
<dbReference type="HOGENOM" id="CLU_019723_0_1_9"/>
<dbReference type="UniPathway" id="UPA00340">
    <property type="reaction ID" value="UER00459"/>
</dbReference>
<dbReference type="Proteomes" id="UP000000531">
    <property type="component" value="Chromosome"/>
</dbReference>
<dbReference type="GO" id="GO:0005737">
    <property type="term" value="C:cytoplasm"/>
    <property type="evidence" value="ECO:0007669"/>
    <property type="project" value="UniProtKB-SubCell"/>
</dbReference>
<dbReference type="GO" id="GO:0008959">
    <property type="term" value="F:phosphate acetyltransferase activity"/>
    <property type="evidence" value="ECO:0007669"/>
    <property type="project" value="UniProtKB-EC"/>
</dbReference>
<dbReference type="GO" id="GO:0006085">
    <property type="term" value="P:acetyl-CoA biosynthetic process"/>
    <property type="evidence" value="ECO:0007669"/>
    <property type="project" value="UniProtKB-UniPathway"/>
</dbReference>
<dbReference type="Gene3D" id="3.40.50.10950">
    <property type="match status" value="1"/>
</dbReference>
<dbReference type="Gene3D" id="3.40.50.10750">
    <property type="entry name" value="Isocitrate/Isopropylmalate dehydrogenase-like"/>
    <property type="match status" value="1"/>
</dbReference>
<dbReference type="InterPro" id="IPR012147">
    <property type="entry name" value="P_Ac_Bu_trans"/>
</dbReference>
<dbReference type="InterPro" id="IPR004614">
    <property type="entry name" value="P_AcTrfase"/>
</dbReference>
<dbReference type="InterPro" id="IPR042113">
    <property type="entry name" value="P_AcTrfase_dom1"/>
</dbReference>
<dbReference type="InterPro" id="IPR042112">
    <property type="entry name" value="P_AcTrfase_dom2"/>
</dbReference>
<dbReference type="InterPro" id="IPR050500">
    <property type="entry name" value="Phos_Acetyltrans/Butyryltrans"/>
</dbReference>
<dbReference type="InterPro" id="IPR002505">
    <property type="entry name" value="PTA_PTB"/>
</dbReference>
<dbReference type="NCBIfam" id="NF007233">
    <property type="entry name" value="PRK09653.1"/>
    <property type="match status" value="1"/>
</dbReference>
<dbReference type="NCBIfam" id="TIGR00651">
    <property type="entry name" value="pta"/>
    <property type="match status" value="1"/>
</dbReference>
<dbReference type="PANTHER" id="PTHR43356">
    <property type="entry name" value="PHOSPHATE ACETYLTRANSFERASE"/>
    <property type="match status" value="1"/>
</dbReference>
<dbReference type="PANTHER" id="PTHR43356:SF3">
    <property type="entry name" value="PHOSPHATE ACETYLTRANSFERASE"/>
    <property type="match status" value="1"/>
</dbReference>
<dbReference type="Pfam" id="PF01515">
    <property type="entry name" value="PTA_PTB"/>
    <property type="match status" value="1"/>
</dbReference>
<dbReference type="PIRSF" id="PIRSF000428">
    <property type="entry name" value="P_Ac_trans"/>
    <property type="match status" value="1"/>
</dbReference>
<dbReference type="SUPFAM" id="SSF53659">
    <property type="entry name" value="Isocitrate/Isopropylmalate dehydrogenase-like"/>
    <property type="match status" value="1"/>
</dbReference>